<dbReference type="EMBL" id="L77118">
    <property type="protein sequence ID" value="AAC37083.1"/>
    <property type="molecule type" value="Genomic_DNA"/>
</dbReference>
<dbReference type="PIR" id="B64511">
    <property type="entry name" value="B64511"/>
</dbReference>
<dbReference type="PaxDb" id="243232-MJ_ECL10"/>
<dbReference type="EnsemblBacteria" id="AAC37083">
    <property type="protein sequence ID" value="AAC37083"/>
    <property type="gene ID" value="MJ_ECL10"/>
</dbReference>
<dbReference type="KEGG" id="mja:MJ_ECL10"/>
<dbReference type="eggNOG" id="arCOG03239">
    <property type="taxonomic scope" value="Archaea"/>
</dbReference>
<dbReference type="HOGENOM" id="CLU_1259098_0_0_2"/>
<dbReference type="InParanoid" id="Q60272"/>
<dbReference type="OrthoDB" id="25344at2157"/>
<dbReference type="Proteomes" id="UP000000805">
    <property type="component" value="Plasmid pDSM2661_1"/>
</dbReference>
<dbReference type="Gene3D" id="3.40.50.300">
    <property type="entry name" value="P-loop containing nucleotide triphosphate hydrolases"/>
    <property type="match status" value="1"/>
</dbReference>
<dbReference type="InterPro" id="IPR041685">
    <property type="entry name" value="AAA_GajA/Old/RecF-like"/>
</dbReference>
<dbReference type="InterPro" id="IPR051396">
    <property type="entry name" value="Bact_Antivir_Def_Nuclease"/>
</dbReference>
<dbReference type="InterPro" id="IPR027417">
    <property type="entry name" value="P-loop_NTPase"/>
</dbReference>
<dbReference type="PANTHER" id="PTHR43581">
    <property type="entry name" value="ATP/GTP PHOSPHATASE"/>
    <property type="match status" value="1"/>
</dbReference>
<dbReference type="PANTHER" id="PTHR43581:SF4">
    <property type="entry name" value="ATP_GTP PHOSPHATASE"/>
    <property type="match status" value="1"/>
</dbReference>
<dbReference type="Pfam" id="PF13175">
    <property type="entry name" value="AAA_15"/>
    <property type="match status" value="1"/>
</dbReference>
<dbReference type="SUPFAM" id="SSF52540">
    <property type="entry name" value="P-loop containing nucleoside triphosphate hydrolases"/>
    <property type="match status" value="1"/>
</dbReference>
<protein>
    <recommendedName>
        <fullName>Uncharacterized protein MJECL10</fullName>
    </recommendedName>
</protein>
<reference key="1">
    <citation type="journal article" date="1996" name="Science">
        <title>Complete genome sequence of the methanogenic archaeon, Methanococcus jannaschii.</title>
        <authorList>
            <person name="Bult C.J."/>
            <person name="White O."/>
            <person name="Olsen G.J."/>
            <person name="Zhou L."/>
            <person name="Fleischmann R.D."/>
            <person name="Sutton G.G."/>
            <person name="Blake J.A."/>
            <person name="FitzGerald L.M."/>
            <person name="Clayton R.A."/>
            <person name="Gocayne J.D."/>
            <person name="Kerlavage A.R."/>
            <person name="Dougherty B.A."/>
            <person name="Tomb J.-F."/>
            <person name="Adams M.D."/>
            <person name="Reich C.I."/>
            <person name="Overbeek R."/>
            <person name="Kirkness E.F."/>
            <person name="Weinstock K.G."/>
            <person name="Merrick J.M."/>
            <person name="Glodek A."/>
            <person name="Scott J.L."/>
            <person name="Geoghagen N.S.M."/>
            <person name="Weidman J.F."/>
            <person name="Fuhrmann J.L."/>
            <person name="Nguyen D."/>
            <person name="Utterback T.R."/>
            <person name="Kelley J.M."/>
            <person name="Peterson J.D."/>
            <person name="Sadow P.W."/>
            <person name="Hanna M.C."/>
            <person name="Cotton M.D."/>
            <person name="Roberts K.M."/>
            <person name="Hurst M.A."/>
            <person name="Kaine B.P."/>
            <person name="Borodovsky M."/>
            <person name="Klenk H.-P."/>
            <person name="Fraser C.M."/>
            <person name="Smith H.O."/>
            <person name="Woese C.R."/>
            <person name="Venter J.C."/>
        </authorList>
    </citation>
    <scope>NUCLEOTIDE SEQUENCE [LARGE SCALE GENOMIC DNA]</scope>
    <source>
        <strain>ATCC 43067 / DSM 2661 / JAL-1 / JCM 10045 / NBRC 100440</strain>
    </source>
</reference>
<feature type="chain" id="PRO_0000107502" description="Uncharacterized protein MJECL10">
    <location>
        <begin position="1"/>
        <end position="219"/>
    </location>
</feature>
<gene>
    <name type="ordered locus">MJECL10</name>
</gene>
<organism>
    <name type="scientific">Methanocaldococcus jannaschii (strain ATCC 43067 / DSM 2661 / JAL-1 / JCM 10045 / NBRC 100440)</name>
    <name type="common">Methanococcus jannaschii</name>
    <dbReference type="NCBI Taxonomy" id="243232"/>
    <lineage>
        <taxon>Archaea</taxon>
        <taxon>Methanobacteriati</taxon>
        <taxon>Methanobacteriota</taxon>
        <taxon>Methanomada group</taxon>
        <taxon>Methanococci</taxon>
        <taxon>Methanococcales</taxon>
        <taxon>Methanocaldococcaceae</taxon>
        <taxon>Methanocaldococcus</taxon>
    </lineage>
</organism>
<name>Y3510_METJA</name>
<keyword id="KW-0614">Plasmid</keyword>
<keyword id="KW-1185">Reference proteome</keyword>
<geneLocation type="plasmid">
    <name>large ECE</name>
</geneLocation>
<accession>Q60272</accession>
<proteinExistence type="predicted"/>
<sequence>MHIHLFRCQCMIETIHIKNFRGIRELKLENLGQINIIAGKNNASKSSILEALALFLSAKEGFSLFIKILREILLWRGWYGEKSIYDLFYKNSKELEVSVKFLNQDFANLTLKNSNQSFANKNIAVELKSDKNSWSGRFDSHLIHPDYISSILTSAEATQSNFEFITSLTLIKFGYIESIYSQAYETQVLQDAIRLLREAYPEVKSLSPLQKYNKWIIHV</sequence>